<gene>
    <name type="ORF">ORF16</name>
</gene>
<keyword id="KW-1185">Reference proteome</keyword>
<dbReference type="EMBL" id="EU606015">
    <property type="protein sequence ID" value="ACF17000.1"/>
    <property type="molecule type" value="Genomic_DNA"/>
</dbReference>
<dbReference type="RefSeq" id="YP_002122377.1">
    <property type="nucleotide sequence ID" value="NC_011132.1"/>
</dbReference>
<dbReference type="SMR" id="B4YNF6"/>
<dbReference type="KEGG" id="vg:6760340"/>
<dbReference type="Proteomes" id="UP000001863">
    <property type="component" value="Segment"/>
</dbReference>
<organism>
    <name type="scientific">Sputnik virophage</name>
    <dbReference type="NCBI Taxonomy" id="543939"/>
    <lineage>
        <taxon>Viruses</taxon>
        <taxon>Varidnaviria</taxon>
        <taxon>Bamfordvirae</taxon>
        <taxon>Preplasmiviricota</taxon>
        <taxon>Maveriviricetes</taxon>
        <taxon>Priklausovirales</taxon>
        <taxon>Lavidaviridae</taxon>
        <taxon>Sputnikvirus</taxon>
        <taxon>Mimivirus-dependent virus Sputnik</taxon>
    </lineage>
</organism>
<sequence length="130" mass="15477">MAQNNKQTKQEINEDVVPYDELYELLMVADKDNVHKDEIIITLNNEKKLTEEKYMVCRKSYEELAQDYRSIKHKMNVFAPKGSLYNNYVKPKLLGSLTEERKREINSNFEKQRLEIINKEHEALKKLRGD</sequence>
<name>V16_SPTNK</name>
<organismHost>
    <name type="scientific">Acanthamoeba polyphaga</name>
    <name type="common">Amoeba</name>
    <dbReference type="NCBI Taxonomy" id="5757"/>
</organismHost>
<accession>B4YNF6</accession>
<protein>
    <recommendedName>
        <fullName>Uncharacterized protein V16</fullName>
    </recommendedName>
</protein>
<proteinExistence type="predicted"/>
<feature type="chain" id="PRO_0000369824" description="Uncharacterized protein V16">
    <location>
        <begin position="1"/>
        <end position="130"/>
    </location>
</feature>
<reference key="1">
    <citation type="journal article" date="2008" name="Nature">
        <title>The virophage as a unique parasite of the giant mimivirus.</title>
        <authorList>
            <person name="La Scola B."/>
            <person name="Desnues C."/>
            <person name="Pagnier I."/>
            <person name="Robert C."/>
            <person name="Barrassi L."/>
            <person name="Fournous G."/>
            <person name="Merchat M."/>
            <person name="Suzan-Monti M."/>
            <person name="Forterre P."/>
            <person name="Koonin E."/>
            <person name="Raoult D."/>
        </authorList>
    </citation>
    <scope>NUCLEOTIDE SEQUENCE [GENOMIC DNA]</scope>
</reference>